<sequence length="205" mass="23016">MIYLDFINQQTTQTAKALLGVKIIYQDDYQTYTGYIVETEAYLGIQDKAAHGFGGKITPKVTSLYKKGGTIYAHVMHTHLLINFVTRTEGIPEGVLIRAIEPDEGIGAMNVNRGKSGYELTNGPGKWTKAFNIPRSIDGSTLNDCKLSIDTNHRKYPKTIIESGRIGIPNKGEWTNKPLRFTVKGNPYVSRMRKSDFQNPDDTWK</sequence>
<accession>Q5HLQ3</accession>
<feature type="chain" id="PRO_0000100110" description="Putative 3-methyladenine DNA glycosylase">
    <location>
        <begin position="1"/>
        <end position="205"/>
    </location>
</feature>
<reference key="1">
    <citation type="journal article" date="2005" name="J. Bacteriol.">
        <title>Insights on evolution of virulence and resistance from the complete genome analysis of an early methicillin-resistant Staphylococcus aureus strain and a biofilm-producing methicillin-resistant Staphylococcus epidermidis strain.</title>
        <authorList>
            <person name="Gill S.R."/>
            <person name="Fouts D.E."/>
            <person name="Archer G.L."/>
            <person name="Mongodin E.F."/>
            <person name="DeBoy R.T."/>
            <person name="Ravel J."/>
            <person name="Paulsen I.T."/>
            <person name="Kolonay J.F."/>
            <person name="Brinkac L.M."/>
            <person name="Beanan M.J."/>
            <person name="Dodson R.J."/>
            <person name="Daugherty S.C."/>
            <person name="Madupu R."/>
            <person name="Angiuoli S.V."/>
            <person name="Durkin A.S."/>
            <person name="Haft D.H."/>
            <person name="Vamathevan J.J."/>
            <person name="Khouri H."/>
            <person name="Utterback T.R."/>
            <person name="Lee C."/>
            <person name="Dimitrov G."/>
            <person name="Jiang L."/>
            <person name="Qin H."/>
            <person name="Weidman J."/>
            <person name="Tran K."/>
            <person name="Kang K.H."/>
            <person name="Hance I.R."/>
            <person name="Nelson K.E."/>
            <person name="Fraser C.M."/>
        </authorList>
    </citation>
    <scope>NUCLEOTIDE SEQUENCE [LARGE SCALE GENOMIC DNA]</scope>
    <source>
        <strain>ATCC 35984 / DSM 28319 / BCRC 17069 / CCUG 31568 / BM 3577 / RP62A</strain>
    </source>
</reference>
<evidence type="ECO:0000255" key="1">
    <source>
        <dbReference type="HAMAP-Rule" id="MF_00527"/>
    </source>
</evidence>
<keyword id="KW-0227">DNA damage</keyword>
<keyword id="KW-0234">DNA repair</keyword>
<keyword id="KW-0378">Hydrolase</keyword>
<keyword id="KW-1185">Reference proteome</keyword>
<proteinExistence type="inferred from homology"/>
<name>3MGH_STAEQ</name>
<dbReference type="EC" id="3.2.2.-" evidence="1"/>
<dbReference type="EMBL" id="CP000029">
    <property type="protein sequence ID" value="AAW55279.1"/>
    <property type="molecule type" value="Genomic_DNA"/>
</dbReference>
<dbReference type="SMR" id="Q5HLQ3"/>
<dbReference type="KEGG" id="ser:SERP1931"/>
<dbReference type="eggNOG" id="COG2094">
    <property type="taxonomic scope" value="Bacteria"/>
</dbReference>
<dbReference type="HOGENOM" id="CLU_060471_2_0_9"/>
<dbReference type="Proteomes" id="UP000000531">
    <property type="component" value="Chromosome"/>
</dbReference>
<dbReference type="GO" id="GO:0003905">
    <property type="term" value="F:alkylbase DNA N-glycosylase activity"/>
    <property type="evidence" value="ECO:0007669"/>
    <property type="project" value="InterPro"/>
</dbReference>
<dbReference type="GO" id="GO:0003677">
    <property type="term" value="F:DNA binding"/>
    <property type="evidence" value="ECO:0007669"/>
    <property type="project" value="InterPro"/>
</dbReference>
<dbReference type="GO" id="GO:0006284">
    <property type="term" value="P:base-excision repair"/>
    <property type="evidence" value="ECO:0007669"/>
    <property type="project" value="InterPro"/>
</dbReference>
<dbReference type="CDD" id="cd00540">
    <property type="entry name" value="AAG"/>
    <property type="match status" value="1"/>
</dbReference>
<dbReference type="FunFam" id="3.10.300.10:FF:000001">
    <property type="entry name" value="Putative 3-methyladenine DNA glycosylase"/>
    <property type="match status" value="1"/>
</dbReference>
<dbReference type="Gene3D" id="3.10.300.10">
    <property type="entry name" value="Methylpurine-DNA glycosylase (MPG)"/>
    <property type="match status" value="1"/>
</dbReference>
<dbReference type="HAMAP" id="MF_00527">
    <property type="entry name" value="3MGH"/>
    <property type="match status" value="1"/>
</dbReference>
<dbReference type="InterPro" id="IPR011034">
    <property type="entry name" value="Formyl_transferase-like_C_sf"/>
</dbReference>
<dbReference type="InterPro" id="IPR003180">
    <property type="entry name" value="MPG"/>
</dbReference>
<dbReference type="InterPro" id="IPR036995">
    <property type="entry name" value="MPG_sf"/>
</dbReference>
<dbReference type="NCBIfam" id="TIGR00567">
    <property type="entry name" value="3mg"/>
    <property type="match status" value="1"/>
</dbReference>
<dbReference type="PANTHER" id="PTHR10429">
    <property type="entry name" value="DNA-3-METHYLADENINE GLYCOSYLASE"/>
    <property type="match status" value="1"/>
</dbReference>
<dbReference type="PANTHER" id="PTHR10429:SF0">
    <property type="entry name" value="DNA-3-METHYLADENINE GLYCOSYLASE"/>
    <property type="match status" value="1"/>
</dbReference>
<dbReference type="Pfam" id="PF02245">
    <property type="entry name" value="Pur_DNA_glyco"/>
    <property type="match status" value="1"/>
</dbReference>
<dbReference type="SUPFAM" id="SSF50486">
    <property type="entry name" value="FMT C-terminal domain-like"/>
    <property type="match status" value="1"/>
</dbReference>
<organism>
    <name type="scientific">Staphylococcus epidermidis (strain ATCC 35984 / DSM 28319 / BCRC 17069 / CCUG 31568 / BM 3577 / RP62A)</name>
    <dbReference type="NCBI Taxonomy" id="176279"/>
    <lineage>
        <taxon>Bacteria</taxon>
        <taxon>Bacillati</taxon>
        <taxon>Bacillota</taxon>
        <taxon>Bacilli</taxon>
        <taxon>Bacillales</taxon>
        <taxon>Staphylococcaceae</taxon>
        <taxon>Staphylococcus</taxon>
    </lineage>
</organism>
<protein>
    <recommendedName>
        <fullName evidence="1">Putative 3-methyladenine DNA glycosylase</fullName>
        <ecNumber evidence="1">3.2.2.-</ecNumber>
    </recommendedName>
</protein>
<gene>
    <name type="ordered locus">SERP1931</name>
</gene>
<comment type="similarity">
    <text evidence="1">Belongs to the DNA glycosylase MPG family.</text>
</comment>